<comment type="function">
    <text evidence="2 6">Sulfotransferase that utilizes 3'-phospho-5'-adenylyl sulfate (PAPS) as sulfonate donor to catalyze the sulfate conjugation. Sulfonation increases the water solubility of most compounds, and therefore their renal excretion, but it can also result in bioactivation to form active metabolites. Sulfonates cholesterol (PubMed:16368200). Catalyzes sulfation of the 3beta-hydroxyl groups of steroids, such as, pregnenolone and dehydroepiandrosterone (DHEA) (PubMed:16368200). Conjugates efficiently cholesterol but has a greater affinity for pregnenolone sulfation. Does not show high activity with DHEA (PubMed:16368200). Plays a role in epidermal cholesterol metabolism and in the regulation of epidermal proliferation and differentiation (By similarity).</text>
</comment>
<comment type="function">
    <molecule>Isoform 2</molecule>
    <text evidence="6">Prefers pregnenolone over DHEA as a substrate and does not sulfate cholesterol.</text>
</comment>
<comment type="catalytic activity">
    <reaction evidence="6">
        <text>an alcohol + 3'-phosphoadenylyl sulfate = an alkyl sulfate + adenosine 3',5'-bisphosphate + H(+)</text>
        <dbReference type="Rhea" id="RHEA:22552"/>
        <dbReference type="ChEBI" id="CHEBI:15378"/>
        <dbReference type="ChEBI" id="CHEBI:30879"/>
        <dbReference type="ChEBI" id="CHEBI:58339"/>
        <dbReference type="ChEBI" id="CHEBI:58343"/>
        <dbReference type="ChEBI" id="CHEBI:83414"/>
        <dbReference type="EC" id="2.8.2.2"/>
    </reaction>
</comment>
<comment type="catalytic activity">
    <reaction evidence="6">
        <text>pregnenolone + 3'-phosphoadenylyl sulfate = pregnenolone sulfate + adenosine 3',5'-bisphosphate + H(+)</text>
        <dbReference type="Rhea" id="RHEA:52356"/>
        <dbReference type="ChEBI" id="CHEBI:15378"/>
        <dbReference type="ChEBI" id="CHEBI:16581"/>
        <dbReference type="ChEBI" id="CHEBI:58339"/>
        <dbReference type="ChEBI" id="CHEBI:58343"/>
        <dbReference type="ChEBI" id="CHEBI:133000"/>
    </reaction>
</comment>
<comment type="catalytic activity">
    <reaction evidence="6">
        <text>3beta-hydroxyandrost-5-en-17-one + 3'-phosphoadenylyl sulfate = dehydroepiandrosterone 3-sulfate + adenosine 3',5'-bisphosphate + H(+)</text>
        <dbReference type="Rhea" id="RHEA:51216"/>
        <dbReference type="ChEBI" id="CHEBI:15378"/>
        <dbReference type="ChEBI" id="CHEBI:28689"/>
        <dbReference type="ChEBI" id="CHEBI:57905"/>
        <dbReference type="ChEBI" id="CHEBI:58339"/>
        <dbReference type="ChEBI" id="CHEBI:58343"/>
    </reaction>
</comment>
<comment type="catalytic activity">
    <reaction evidence="6">
        <text>cholesterol + 3'-phosphoadenylyl sulfate = cholesterol sulfate + adenosine 3',5'-bisphosphate + H(+)</text>
        <dbReference type="Rhea" id="RHEA:52368"/>
        <dbReference type="ChEBI" id="CHEBI:15378"/>
        <dbReference type="ChEBI" id="CHEBI:16113"/>
        <dbReference type="ChEBI" id="CHEBI:58339"/>
        <dbReference type="ChEBI" id="CHEBI:58343"/>
        <dbReference type="ChEBI" id="CHEBI:136579"/>
    </reaction>
</comment>
<comment type="biophysicochemical properties">
    <kinetics>
        <KM evidence="6">8.9 uM for pregnenolone (isoform 2)</KM>
        <KM evidence="6">17.9 uM for dehydroepiandrosterone (DHEA) (isoform 2)</KM>
        <KM evidence="6">1.7 uM for cholesterol (isoform 1)</KM>
    </kinetics>
</comment>
<comment type="subcellular location">
    <subcellularLocation>
        <location evidence="4">Cytoplasm</location>
        <location evidence="4">Cytosol</location>
    </subcellularLocation>
    <subcellularLocation>
        <location evidence="2">Microsome</location>
    </subcellularLocation>
    <subcellularLocation>
        <location evidence="2">Nucleus</location>
    </subcellularLocation>
</comment>
<comment type="alternative products">
    <event type="alternative splicing"/>
    <isoform>
        <id>Q29YR5-1</id>
        <name evidence="6">1</name>
        <name evidence="6">SULT2B1b</name>
        <sequence type="displayed"/>
    </isoform>
    <isoform>
        <id>Q29YR5-2</id>
        <name evidence="6">2</name>
        <name evidence="6">SULT2B1a</name>
        <sequence type="described" ref="VSP_052079"/>
    </isoform>
</comment>
<comment type="tissue specificity">
    <text evidence="6">Isoform 1 is expressed in skin and testis. Higher level of isoform 2 expressed in skin and intestine, moderate level in the kidney, low level in liver, stomach and placenta.</text>
</comment>
<comment type="similarity">
    <text evidence="8">Belongs to the sulfotransferase 1 family.</text>
</comment>
<keyword id="KW-0025">Alternative splicing</keyword>
<keyword id="KW-0963">Cytoplasm</keyword>
<keyword id="KW-0256">Endoplasmic reticulum</keyword>
<keyword id="KW-0443">Lipid metabolism</keyword>
<keyword id="KW-0492">Microsome</keyword>
<keyword id="KW-0539">Nucleus</keyword>
<keyword id="KW-1185">Reference proteome</keyword>
<keyword id="KW-0753">Steroid metabolism</keyword>
<keyword id="KW-0808">Transferase</keyword>
<dbReference type="EC" id="2.8.2.2" evidence="6"/>
<dbReference type="EMBL" id="AY827147">
    <property type="protein sequence ID" value="AAX34390.1"/>
    <property type="molecule type" value="mRNA"/>
</dbReference>
<dbReference type="EMBL" id="AY827148">
    <property type="protein sequence ID" value="AAX34391.1"/>
    <property type="molecule type" value="mRNA"/>
</dbReference>
<dbReference type="RefSeq" id="NP_001034754.1">
    <molecule id="Q29YR5-2"/>
    <property type="nucleotide sequence ID" value="NM_001039665.2"/>
</dbReference>
<dbReference type="RefSeq" id="XP_006229093.1">
    <molecule id="Q29YR5-1"/>
    <property type="nucleotide sequence ID" value="XM_006229031.5"/>
</dbReference>
<dbReference type="SMR" id="Q29YR5"/>
<dbReference type="FunCoup" id="Q29YR5">
    <property type="interactions" value="82"/>
</dbReference>
<dbReference type="STRING" id="10116.ENSRNOP00000060264"/>
<dbReference type="iPTMnet" id="Q29YR5"/>
<dbReference type="PhosphoSitePlus" id="Q29YR5"/>
<dbReference type="jPOST" id="Q29YR5"/>
<dbReference type="PaxDb" id="10116-ENSRNOP00000060264"/>
<dbReference type="Ensembl" id="ENSRNOT00000028570.8">
    <molecule id="Q29YR5-1"/>
    <property type="protein sequence ID" value="ENSRNOP00000028570.5"/>
    <property type="gene ID" value="ENSRNOG00000021046.9"/>
</dbReference>
<dbReference type="Ensembl" id="ENSRNOT00000067430.4">
    <molecule id="Q29YR5-2"/>
    <property type="protein sequence ID" value="ENSRNOP00000060264.1"/>
    <property type="gene ID" value="ENSRNOG00000021046.9"/>
</dbReference>
<dbReference type="GeneID" id="292915"/>
<dbReference type="KEGG" id="rno:292915"/>
<dbReference type="UCSC" id="RGD:1308882">
    <molecule id="Q29YR5-1"/>
    <property type="organism name" value="rat"/>
</dbReference>
<dbReference type="AGR" id="RGD:1308882"/>
<dbReference type="CTD" id="6820"/>
<dbReference type="RGD" id="1308882">
    <property type="gene designation" value="Sult2b1"/>
</dbReference>
<dbReference type="eggNOG" id="KOG1584">
    <property type="taxonomic scope" value="Eukaryota"/>
</dbReference>
<dbReference type="GeneTree" id="ENSGT00940000159269"/>
<dbReference type="HOGENOM" id="CLU_027239_1_0_1"/>
<dbReference type="InParanoid" id="Q29YR5"/>
<dbReference type="OrthoDB" id="39517at9989"/>
<dbReference type="PhylomeDB" id="Q29YR5"/>
<dbReference type="TreeFam" id="TF321745"/>
<dbReference type="BRENDA" id="2.8.2.2">
    <property type="organism ID" value="5301"/>
</dbReference>
<dbReference type="Reactome" id="R-RNO-156584">
    <property type="pathway name" value="Cytosolic sulfonation of small molecules"/>
</dbReference>
<dbReference type="SABIO-RK" id="Q29YR5"/>
<dbReference type="PRO" id="PR:Q29YR5"/>
<dbReference type="Proteomes" id="UP000002494">
    <property type="component" value="Chromosome 1"/>
</dbReference>
<dbReference type="Bgee" id="ENSRNOG00000021046">
    <property type="expression patterns" value="Expressed in jejunum and 17 other cell types or tissues"/>
</dbReference>
<dbReference type="GO" id="GO:0005737">
    <property type="term" value="C:cytoplasm"/>
    <property type="evidence" value="ECO:0000318"/>
    <property type="project" value="GO_Central"/>
</dbReference>
<dbReference type="GO" id="GO:0005829">
    <property type="term" value="C:cytosol"/>
    <property type="evidence" value="ECO:0000250"/>
    <property type="project" value="UniProtKB"/>
</dbReference>
<dbReference type="GO" id="GO:0005783">
    <property type="term" value="C:endoplasmic reticulum"/>
    <property type="evidence" value="ECO:0007669"/>
    <property type="project" value="UniProtKB-KW"/>
</dbReference>
<dbReference type="GO" id="GO:0005634">
    <property type="term" value="C:nucleus"/>
    <property type="evidence" value="ECO:0007669"/>
    <property type="project" value="UniProtKB-SubCell"/>
</dbReference>
<dbReference type="GO" id="GO:0015485">
    <property type="term" value="F:cholesterol binding"/>
    <property type="evidence" value="ECO:0000266"/>
    <property type="project" value="RGD"/>
</dbReference>
<dbReference type="GO" id="GO:0051922">
    <property type="term" value="F:cholesterol sulfotransferase activity"/>
    <property type="evidence" value="ECO:0007669"/>
    <property type="project" value="RHEA"/>
</dbReference>
<dbReference type="GO" id="GO:0003676">
    <property type="term" value="F:nucleic acid binding"/>
    <property type="evidence" value="ECO:0000266"/>
    <property type="project" value="RGD"/>
</dbReference>
<dbReference type="GO" id="GO:0036094">
    <property type="term" value="F:small molecule binding"/>
    <property type="evidence" value="ECO:0000266"/>
    <property type="project" value="RGD"/>
</dbReference>
<dbReference type="GO" id="GO:1990239">
    <property type="term" value="F:steroid hormone binding"/>
    <property type="evidence" value="ECO:0000266"/>
    <property type="project" value="RGD"/>
</dbReference>
<dbReference type="GO" id="GO:0050294">
    <property type="term" value="F:steroid sulfotransferase activity"/>
    <property type="evidence" value="ECO:0000266"/>
    <property type="project" value="RGD"/>
</dbReference>
<dbReference type="GO" id="GO:0008146">
    <property type="term" value="F:sulfotransferase activity"/>
    <property type="evidence" value="ECO:0000266"/>
    <property type="project" value="RGD"/>
</dbReference>
<dbReference type="GO" id="GO:0050427">
    <property type="term" value="P:3'-phosphoadenosine 5'-phosphosulfate metabolic process"/>
    <property type="evidence" value="ECO:0000266"/>
    <property type="project" value="RGD"/>
</dbReference>
<dbReference type="GO" id="GO:0008203">
    <property type="term" value="P:cholesterol metabolic process"/>
    <property type="evidence" value="ECO:0000250"/>
    <property type="project" value="UniProtKB"/>
</dbReference>
<dbReference type="GO" id="GO:0008285">
    <property type="term" value="P:negative regulation of cell population proliferation"/>
    <property type="evidence" value="ECO:0000266"/>
    <property type="project" value="RGD"/>
</dbReference>
<dbReference type="GO" id="GO:0045606">
    <property type="term" value="P:positive regulation of epidermal cell differentiation"/>
    <property type="evidence" value="ECO:0000266"/>
    <property type="project" value="RGD"/>
</dbReference>
<dbReference type="GO" id="GO:0008202">
    <property type="term" value="P:steroid metabolic process"/>
    <property type="evidence" value="ECO:0000266"/>
    <property type="project" value="RGD"/>
</dbReference>
<dbReference type="GO" id="GO:0000103">
    <property type="term" value="P:sulfate assimilation"/>
    <property type="evidence" value="ECO:0000266"/>
    <property type="project" value="RGD"/>
</dbReference>
<dbReference type="GO" id="GO:0051923">
    <property type="term" value="P:sulfation"/>
    <property type="evidence" value="ECO:0000318"/>
    <property type="project" value="GO_Central"/>
</dbReference>
<dbReference type="FunFam" id="3.40.50.300:FF:000433">
    <property type="entry name" value="Estrogen sulfotransferase"/>
    <property type="match status" value="1"/>
</dbReference>
<dbReference type="Gene3D" id="3.40.50.300">
    <property type="entry name" value="P-loop containing nucleotide triphosphate hydrolases"/>
    <property type="match status" value="1"/>
</dbReference>
<dbReference type="InterPro" id="IPR027417">
    <property type="entry name" value="P-loop_NTPase"/>
</dbReference>
<dbReference type="InterPro" id="IPR000863">
    <property type="entry name" value="Sulfotransferase_dom"/>
</dbReference>
<dbReference type="PANTHER" id="PTHR11783">
    <property type="entry name" value="SULFOTRANSFERASE SULT"/>
    <property type="match status" value="1"/>
</dbReference>
<dbReference type="Pfam" id="PF00685">
    <property type="entry name" value="Sulfotransfer_1"/>
    <property type="match status" value="1"/>
</dbReference>
<dbReference type="SUPFAM" id="SSF52540">
    <property type="entry name" value="P-loop containing nucleoside triphosphate hydrolases"/>
    <property type="match status" value="1"/>
</dbReference>
<reference evidence="8 9" key="1">
    <citation type="journal article" date="2006" name="Gene">
        <title>Cloning, characterization and tissue expression of rat SULT2B1a and SULT2B1b steroid/sterol sulfotransferase isoforms: divergence of the rat SULT2B1 gene structure from orthologous human and mouse genes.</title>
        <authorList>
            <person name="Kohjitani A."/>
            <person name="Fuda H."/>
            <person name="Hanyu O."/>
            <person name="Strott C.A."/>
        </authorList>
    </citation>
    <scope>NUCLEOTIDE SEQUENCE [MRNA] (ISOFORMS 1 AND 2)</scope>
    <scope>CATALYTIC ACTIVITY</scope>
    <scope>BIOPHYSICOCHEMICAL PROPERTIES</scope>
    <scope>TISSUE SPECIFICITY</scope>
    <scope>FUNCTION</scope>
    <source>
        <strain evidence="9">Sprague-Dawley</strain>
        <tissue evidence="6">Brain</tissue>
    </source>
</reference>
<reference key="2">
    <citation type="journal article" date="2012" name="Nat. Commun.">
        <title>Quantitative maps of protein phosphorylation sites across 14 different rat organs and tissues.</title>
        <authorList>
            <person name="Lundby A."/>
            <person name="Secher A."/>
            <person name="Lage K."/>
            <person name="Nordsborg N.B."/>
            <person name="Dmytriyev A."/>
            <person name="Lundby C."/>
            <person name="Olsen J.V."/>
        </authorList>
    </citation>
    <scope>IDENTIFICATION BY MASS SPECTROMETRY [LARGE SCALE ANALYSIS]</scope>
</reference>
<feature type="chain" id="PRO_0000244488" description="Sulfotransferase 2B1">
    <location>
        <begin position="1"/>
        <end position="340"/>
    </location>
</feature>
<feature type="region of interest" description="Disordered" evidence="5">
    <location>
        <begin position="301"/>
        <end position="340"/>
    </location>
</feature>
<feature type="active site" description="Proton acceptor" evidence="3">
    <location>
        <position position="122"/>
    </location>
</feature>
<feature type="binding site" evidence="3">
    <location>
        <begin position="67"/>
        <end position="72"/>
    </location>
    <ligand>
        <name>3'-phosphoadenylyl sulfate</name>
        <dbReference type="ChEBI" id="CHEBI:58339"/>
    </ligand>
</feature>
<feature type="binding site" evidence="1">
    <location>
        <position position="95"/>
    </location>
    <ligand>
        <name>substrate</name>
    </ligand>
</feature>
<feature type="binding site" evidence="1">
    <location>
        <position position="100"/>
    </location>
    <ligand>
        <name>substrate</name>
    </ligand>
</feature>
<feature type="binding site" evidence="3">
    <location>
        <position position="144"/>
    </location>
    <ligand>
        <name>3'-phosphoadenylyl sulfate</name>
        <dbReference type="ChEBI" id="CHEBI:58339"/>
    </ligand>
</feature>
<feature type="binding site" evidence="3">
    <location>
        <position position="152"/>
    </location>
    <ligand>
        <name>3'-phosphoadenylyl sulfate</name>
        <dbReference type="ChEBI" id="CHEBI:58339"/>
    </ligand>
</feature>
<feature type="binding site" evidence="3">
    <location>
        <position position="207"/>
    </location>
    <ligand>
        <name>3'-phosphoadenylyl sulfate</name>
        <dbReference type="ChEBI" id="CHEBI:58339"/>
    </ligand>
</feature>
<feature type="binding site" evidence="3">
    <location>
        <begin position="241"/>
        <end position="246"/>
    </location>
    <ligand>
        <name>3'-phosphoadenylyl sulfate</name>
        <dbReference type="ChEBI" id="CHEBI:58339"/>
    </ligand>
</feature>
<feature type="binding site" evidence="3">
    <location>
        <begin position="271"/>
        <end position="273"/>
    </location>
    <ligand>
        <name>3'-phosphoadenylyl sulfate</name>
        <dbReference type="ChEBI" id="CHEBI:58339"/>
    </ligand>
</feature>
<feature type="splice variant" id="VSP_052079" description="In isoform 2." evidence="7">
    <original>MDGPQPPALWGSLENRVSEL</original>
    <variation>MSPWSRNTCYSSPSMRLDRSCARNTARWGHWKEGKPHGGLTGETEAGSSWNGGSE</variation>
    <location>
        <begin position="1"/>
        <end position="20"/>
    </location>
</feature>
<sequence length="340" mass="38322">MDGPQPPALWGSLENRVSELSQKLQGEYFRYKGIPFPVGMYTPESLSLAENTSNVRDDDIFIVTYPKSGTNWMIEIICLILKDGDPSWIRSEPIWQRAPWCETTISAFSLPERPSPRLMCSHLPIELFTKAAFSSKAKVIYLGRNPRDVVVSLYYYSKIAVQLKDPGTPEQFLQNFLKGEVQFGSWFDHIKGWIRMRGRENFLFITYEELQQDLRGSVQLICEFLGRPLGEEALSSVVAHSAFAAMKANNMSNYTLLPASLLDHRQGAFLRKGISGDWKNHFTVAQSETFDQVYREQMHGLPSFPWDRSAEDGSPDGETEPSPSPSPGLASDDPNPGSSQ</sequence>
<proteinExistence type="evidence at protein level"/>
<organism>
    <name type="scientific">Rattus norvegicus</name>
    <name type="common">Rat</name>
    <dbReference type="NCBI Taxonomy" id="10116"/>
    <lineage>
        <taxon>Eukaryota</taxon>
        <taxon>Metazoa</taxon>
        <taxon>Chordata</taxon>
        <taxon>Craniata</taxon>
        <taxon>Vertebrata</taxon>
        <taxon>Euteleostomi</taxon>
        <taxon>Mammalia</taxon>
        <taxon>Eutheria</taxon>
        <taxon>Euarchontoglires</taxon>
        <taxon>Glires</taxon>
        <taxon>Rodentia</taxon>
        <taxon>Myomorpha</taxon>
        <taxon>Muroidea</taxon>
        <taxon>Muridae</taxon>
        <taxon>Murinae</taxon>
        <taxon>Rattus</taxon>
    </lineage>
</organism>
<protein>
    <recommendedName>
        <fullName>Sulfotransferase 2B1</fullName>
        <ecNumber evidence="6">2.8.2.2</ecNumber>
    </recommendedName>
    <alternativeName>
        <fullName>Alcohol sulfotransferase</fullName>
    </alternativeName>
    <alternativeName>
        <fullName>Hydroxysteroid sulfotransferase 2</fullName>
    </alternativeName>
    <alternativeName>
        <fullName>Sulfotransferase family cytosolic 2B member 1</fullName>
        <shortName>ST2B1</shortName>
    </alternativeName>
</protein>
<gene>
    <name evidence="10" type="primary">Sult2b1</name>
</gene>
<name>ST2B1_RAT</name>
<evidence type="ECO:0000250" key="1"/>
<evidence type="ECO:0000250" key="2">
    <source>
        <dbReference type="UniProtKB" id="O00204"/>
    </source>
</evidence>
<evidence type="ECO:0000250" key="3">
    <source>
        <dbReference type="UniProtKB" id="P49891"/>
    </source>
</evidence>
<evidence type="ECO:0000250" key="4">
    <source>
        <dbReference type="UniProtKB" id="P52843"/>
    </source>
</evidence>
<evidence type="ECO:0000256" key="5">
    <source>
        <dbReference type="SAM" id="MobiDB-lite"/>
    </source>
</evidence>
<evidence type="ECO:0000269" key="6">
    <source>
    </source>
</evidence>
<evidence type="ECO:0000303" key="7">
    <source>
    </source>
</evidence>
<evidence type="ECO:0000305" key="8"/>
<evidence type="ECO:0000312" key="9">
    <source>
        <dbReference type="EMBL" id="AAX34390.1"/>
    </source>
</evidence>
<evidence type="ECO:0000312" key="10">
    <source>
        <dbReference type="RGD" id="1308882"/>
    </source>
</evidence>
<accession>Q29YR5</accession>
<accession>Q29YR6</accession>